<reference key="1">
    <citation type="journal article" date="2001" name="Nature">
        <title>Complete genome sequence of Salmonella enterica serovar Typhimurium LT2.</title>
        <authorList>
            <person name="McClelland M."/>
            <person name="Sanderson K.E."/>
            <person name="Spieth J."/>
            <person name="Clifton S.W."/>
            <person name="Latreille P."/>
            <person name="Courtney L."/>
            <person name="Porwollik S."/>
            <person name="Ali J."/>
            <person name="Dante M."/>
            <person name="Du F."/>
            <person name="Hou S."/>
            <person name="Layman D."/>
            <person name="Leonard S."/>
            <person name="Nguyen C."/>
            <person name="Scott K."/>
            <person name="Holmes A."/>
            <person name="Grewal N."/>
            <person name="Mulvaney E."/>
            <person name="Ryan E."/>
            <person name="Sun H."/>
            <person name="Florea L."/>
            <person name="Miller W."/>
            <person name="Stoneking T."/>
            <person name="Nhan M."/>
            <person name="Waterston R."/>
            <person name="Wilson R.K."/>
        </authorList>
    </citation>
    <scope>NUCLEOTIDE SEQUENCE [LARGE SCALE GENOMIC DNA]</scope>
    <source>
        <strain>LT2 / SGSC1412 / ATCC 700720</strain>
    </source>
</reference>
<gene>
    <name evidence="2" type="primary">aaeB</name>
    <name type="ordered locus">STM3364</name>
</gene>
<sequence>MGIFSIANQHIRFAVKLACAIVLALFIGFHFQLETPRWAVLTAAIVAAGPAFAAGGEPYSGAIRYRGMLRIIGTFIGCIAALIIIISMIRAPLLMILVCCVWAGFCTWISSLVRIENSYAWGLSGYTALIIVITIQTEPLLTPQFALERCSEIVIGIGCAILADLLFSPRSIKQEVDRELDSLLVAQYQLMQLCIKHGDSEEVDNAWGDLVRRTAALEGMRSNLNMESSRWVRANRRLKALNTLSLTLITQSCETYLIQNTRPELITDTFRELFETPVETVQDVHRQLKRMRRVIVWTGERETPVTLYSWVGAATRYLLLKRGVISNTKISATEEEILQGEPVVKVESAERHHAMVNFWRTTLSCILGTLFWLWTGWTSGNGAMVMIAVVTSLAMRLPNPRMVCIDFIYGTLAALPLGLLYFLVIIPNTQQSMLLLCLSLAVLGFFIGIEVQKRRLGSMGALASTINIIVLDNPMTFHFSQFLDSALGQIVGCMLAFIVILLVRDKSKDRTGRVLLNQFVSAAVSAMTTNVVRRKENRLPALYQQLFLLMNKFPGDLPKFRLALTMIIAHQRLRDAPIPVNEDLSVFHRQLRRTADHVISAGSDDKRRRYFGQLLDELDIYQEKLRIWEAPPQVTEPVKRLTGMLHKYQNALTDS</sequence>
<proteinExistence type="inferred from homology"/>
<dbReference type="EMBL" id="AE006468">
    <property type="protein sequence ID" value="AAL22233.1"/>
    <property type="molecule type" value="Genomic_DNA"/>
</dbReference>
<dbReference type="RefSeq" id="WP_000510913.1">
    <property type="nucleotide sequence ID" value="NC_003197.2"/>
</dbReference>
<dbReference type="SMR" id="Q8ZLP5"/>
<dbReference type="STRING" id="99287.STM3364"/>
<dbReference type="PaxDb" id="99287-STM3364"/>
<dbReference type="KEGG" id="stm:STM3364"/>
<dbReference type="PATRIC" id="fig|99287.12.peg.3565"/>
<dbReference type="HOGENOM" id="CLU_027647_0_0_6"/>
<dbReference type="OMA" id="PARDWFY"/>
<dbReference type="PhylomeDB" id="Q8ZLP5"/>
<dbReference type="BioCyc" id="SENT99287:STM3364-MONOMER"/>
<dbReference type="Proteomes" id="UP000001014">
    <property type="component" value="Chromosome"/>
</dbReference>
<dbReference type="GO" id="GO:0005886">
    <property type="term" value="C:plasma membrane"/>
    <property type="evidence" value="ECO:0000318"/>
    <property type="project" value="GO_Central"/>
</dbReference>
<dbReference type="GO" id="GO:0022857">
    <property type="term" value="F:transmembrane transporter activity"/>
    <property type="evidence" value="ECO:0007669"/>
    <property type="project" value="UniProtKB-UniRule"/>
</dbReference>
<dbReference type="GO" id="GO:0046942">
    <property type="term" value="P:carboxylic acid transport"/>
    <property type="evidence" value="ECO:0007669"/>
    <property type="project" value="InterPro"/>
</dbReference>
<dbReference type="HAMAP" id="MF_01545">
    <property type="entry name" value="AaeB"/>
    <property type="match status" value="1"/>
</dbReference>
<dbReference type="InterPro" id="IPR006726">
    <property type="entry name" value="PHBA_efflux_AaeB/fusaric-R"/>
</dbReference>
<dbReference type="InterPro" id="IPR023706">
    <property type="entry name" value="PHBA_efflux_pump_AaeB"/>
</dbReference>
<dbReference type="NCBIfam" id="NF007916">
    <property type="entry name" value="PRK10631.1"/>
    <property type="match status" value="1"/>
</dbReference>
<dbReference type="PANTHER" id="PTHR30509:SF9">
    <property type="entry name" value="MULTIDRUG RESISTANCE PROTEIN MDTO"/>
    <property type="match status" value="1"/>
</dbReference>
<dbReference type="PANTHER" id="PTHR30509">
    <property type="entry name" value="P-HYDROXYBENZOIC ACID EFFLUX PUMP SUBUNIT-RELATED"/>
    <property type="match status" value="1"/>
</dbReference>
<dbReference type="Pfam" id="PF04632">
    <property type="entry name" value="FUSC"/>
    <property type="match status" value="1"/>
</dbReference>
<feature type="chain" id="PRO_0000210084" description="p-hydroxybenzoic acid efflux pump subunit AaeB">
    <location>
        <begin position="1"/>
        <end position="655"/>
    </location>
</feature>
<feature type="topological domain" description="Periplasmic" evidence="1">
    <location>
        <begin position="1"/>
        <end position="12"/>
    </location>
</feature>
<feature type="transmembrane region" description="Helical" evidence="2">
    <location>
        <begin position="13"/>
        <end position="33"/>
    </location>
</feature>
<feature type="topological domain" description="Cytoplasmic" evidence="1">
    <location>
        <begin position="34"/>
        <end position="37"/>
    </location>
</feature>
<feature type="transmembrane region" description="Helical" evidence="2">
    <location>
        <begin position="38"/>
        <end position="58"/>
    </location>
</feature>
<feature type="topological domain" description="Periplasmic" evidence="1">
    <location>
        <begin position="59"/>
        <end position="68"/>
    </location>
</feature>
<feature type="transmembrane region" description="Helical" evidence="2">
    <location>
        <begin position="69"/>
        <end position="89"/>
    </location>
</feature>
<feature type="topological domain" description="Cytoplasmic" evidence="1">
    <location>
        <begin position="90"/>
        <end position="92"/>
    </location>
</feature>
<feature type="transmembrane region" description="Helical" evidence="2">
    <location>
        <begin position="93"/>
        <end position="113"/>
    </location>
</feature>
<feature type="topological domain" description="Periplasmic" evidence="1">
    <location>
        <begin position="114"/>
        <end position="120"/>
    </location>
</feature>
<feature type="transmembrane region" description="Helical" evidence="2">
    <location>
        <begin position="121"/>
        <end position="141"/>
    </location>
</feature>
<feature type="topological domain" description="Cytoplasmic" evidence="1">
    <location>
        <begin position="142"/>
        <end position="151"/>
    </location>
</feature>
<feature type="transmembrane region" description="Helical" evidence="2">
    <location>
        <begin position="152"/>
        <end position="172"/>
    </location>
</feature>
<feature type="topological domain" description="Periplasmic" evidence="1">
    <location>
        <begin position="173"/>
        <end position="369"/>
    </location>
</feature>
<feature type="transmembrane region" description="Helical" evidence="2">
    <location>
        <begin position="370"/>
        <end position="390"/>
    </location>
</feature>
<feature type="topological domain" description="Cytoplasmic" evidence="1">
    <location>
        <begin position="391"/>
        <end position="406"/>
    </location>
</feature>
<feature type="transmembrane region" description="Helical" evidence="2">
    <location>
        <begin position="407"/>
        <end position="427"/>
    </location>
</feature>
<feature type="topological domain" description="Periplasmic" evidence="1">
    <location>
        <begin position="428"/>
        <end position="430"/>
    </location>
</feature>
<feature type="transmembrane region" description="Helical" evidence="2">
    <location>
        <begin position="431"/>
        <end position="451"/>
    </location>
</feature>
<feature type="topological domain" description="Cytoplasmic" evidence="1">
    <location>
        <begin position="452"/>
        <end position="458"/>
    </location>
</feature>
<feature type="transmembrane region" description="Helical" evidence="2">
    <location>
        <begin position="459"/>
        <end position="479"/>
    </location>
</feature>
<feature type="topological domain" description="Periplasmic" evidence="1">
    <location>
        <begin position="480"/>
        <end position="481"/>
    </location>
</feature>
<feature type="transmembrane region" description="Helical" evidence="2">
    <location>
        <begin position="482"/>
        <end position="502"/>
    </location>
</feature>
<feature type="topological domain" description="Cytoplasmic" evidence="1">
    <location>
        <begin position="503"/>
        <end position="655"/>
    </location>
</feature>
<evidence type="ECO:0000255" key="1"/>
<evidence type="ECO:0000255" key="2">
    <source>
        <dbReference type="HAMAP-Rule" id="MF_01545"/>
    </source>
</evidence>
<keyword id="KW-0997">Cell inner membrane</keyword>
<keyword id="KW-1003">Cell membrane</keyword>
<keyword id="KW-0472">Membrane</keyword>
<keyword id="KW-1185">Reference proteome</keyword>
<keyword id="KW-0812">Transmembrane</keyword>
<keyword id="KW-1133">Transmembrane helix</keyword>
<keyword id="KW-0813">Transport</keyword>
<accession>Q8ZLP5</accession>
<organism>
    <name type="scientific">Salmonella typhimurium (strain LT2 / SGSC1412 / ATCC 700720)</name>
    <dbReference type="NCBI Taxonomy" id="99287"/>
    <lineage>
        <taxon>Bacteria</taxon>
        <taxon>Pseudomonadati</taxon>
        <taxon>Pseudomonadota</taxon>
        <taxon>Gammaproteobacteria</taxon>
        <taxon>Enterobacterales</taxon>
        <taxon>Enterobacteriaceae</taxon>
        <taxon>Salmonella</taxon>
    </lineage>
</organism>
<protein>
    <recommendedName>
        <fullName evidence="2">p-hydroxybenzoic acid efflux pump subunit AaeB</fullName>
        <shortName evidence="2">pHBA efflux pump protein B</shortName>
    </recommendedName>
</protein>
<name>AAEB_SALTY</name>
<comment type="function">
    <text evidence="2">Forms an efflux pump with AaeA. Could function as a metabolic relief valve, allowing to eliminate certain compounds when they accumulate to high levels in the cell.</text>
</comment>
<comment type="subcellular location">
    <subcellularLocation>
        <location evidence="2">Cell inner membrane</location>
        <topology evidence="2">Multi-pass membrane protein</topology>
    </subcellularLocation>
</comment>
<comment type="similarity">
    <text evidence="2">Belongs to the aromatic acid exporter ArAE (TC 2.A.85) family.</text>
</comment>